<organism>
    <name type="scientific">Brucella abortus biovar 1 (strain 9-941)</name>
    <dbReference type="NCBI Taxonomy" id="262698"/>
    <lineage>
        <taxon>Bacteria</taxon>
        <taxon>Pseudomonadati</taxon>
        <taxon>Pseudomonadota</taxon>
        <taxon>Alphaproteobacteria</taxon>
        <taxon>Hyphomicrobiales</taxon>
        <taxon>Brucellaceae</taxon>
        <taxon>Brucella/Ochrobactrum group</taxon>
        <taxon>Brucella</taxon>
    </lineage>
</organism>
<dbReference type="EMBL" id="AE017223">
    <property type="protein sequence ID" value="AAX74697.1"/>
    <property type="molecule type" value="Genomic_DNA"/>
</dbReference>
<dbReference type="PDB" id="7TJ1">
    <property type="method" value="X-ray"/>
    <property type="resolution" value="2.10 A"/>
    <property type="chains" value="A/B/C/D=118-270"/>
</dbReference>
<dbReference type="PDBsum" id="7TJ1"/>
<dbReference type="SMR" id="Q57CD7"/>
<dbReference type="EnsemblBacteria" id="AAX74697">
    <property type="protein sequence ID" value="AAX74697"/>
    <property type="gene ID" value="BruAb1_1366"/>
</dbReference>
<dbReference type="KEGG" id="bmb:BruAb1_1366"/>
<dbReference type="HOGENOM" id="CLU_1029234_0_0_5"/>
<dbReference type="Proteomes" id="UP000000540">
    <property type="component" value="Chromosome I"/>
</dbReference>
<dbReference type="GO" id="GO:0005886">
    <property type="term" value="C:plasma membrane"/>
    <property type="evidence" value="ECO:0007669"/>
    <property type="project" value="UniProtKB-SubCell"/>
</dbReference>
<dbReference type="GO" id="GO:0062054">
    <property type="term" value="F:fluoride channel activity"/>
    <property type="evidence" value="ECO:0007669"/>
    <property type="project" value="UniProtKB-UniRule"/>
</dbReference>
<dbReference type="GO" id="GO:0046872">
    <property type="term" value="F:metal ion binding"/>
    <property type="evidence" value="ECO:0007669"/>
    <property type="project" value="UniProtKB-KW"/>
</dbReference>
<dbReference type="GO" id="GO:0140114">
    <property type="term" value="P:cellular detoxification of fluoride"/>
    <property type="evidence" value="ECO:0007669"/>
    <property type="project" value="UniProtKB-UniRule"/>
</dbReference>
<dbReference type="CDD" id="cd14797">
    <property type="entry name" value="DUF302"/>
    <property type="match status" value="1"/>
</dbReference>
<dbReference type="Gene3D" id="3.30.310.70">
    <property type="entry name" value="TT1751-like domain"/>
    <property type="match status" value="1"/>
</dbReference>
<dbReference type="HAMAP" id="MF_00454">
    <property type="entry name" value="FluC"/>
    <property type="match status" value="1"/>
</dbReference>
<dbReference type="InterPro" id="IPR005180">
    <property type="entry name" value="DUF302"/>
</dbReference>
<dbReference type="InterPro" id="IPR003691">
    <property type="entry name" value="FluC"/>
</dbReference>
<dbReference type="InterPro" id="IPR035923">
    <property type="entry name" value="TT1751-like_sf"/>
</dbReference>
<dbReference type="NCBIfam" id="NF002454">
    <property type="entry name" value="PRK01636.1-2"/>
    <property type="match status" value="1"/>
</dbReference>
<dbReference type="PANTHER" id="PTHR38342:SF2">
    <property type="entry name" value="INNER MEMBRANE OR EXPORTED"/>
    <property type="match status" value="1"/>
</dbReference>
<dbReference type="PANTHER" id="PTHR38342">
    <property type="entry name" value="SLR5037 PROTEIN"/>
    <property type="match status" value="1"/>
</dbReference>
<dbReference type="Pfam" id="PF02537">
    <property type="entry name" value="CRCB"/>
    <property type="match status" value="1"/>
</dbReference>
<dbReference type="Pfam" id="PF03625">
    <property type="entry name" value="DUF302"/>
    <property type="match status" value="1"/>
</dbReference>
<dbReference type="SUPFAM" id="SSF103247">
    <property type="entry name" value="TT1751-like"/>
    <property type="match status" value="1"/>
</dbReference>
<proteinExistence type="evidence at protein level"/>
<feature type="chain" id="PRO_0000110067" description="Fluoride-specific ion channel FluC 1">
    <location>
        <begin position="1"/>
        <end position="270"/>
    </location>
</feature>
<feature type="transmembrane region" description="Helical" evidence="1">
    <location>
        <begin position="4"/>
        <end position="24"/>
    </location>
</feature>
<feature type="transmembrane region" description="Helical" evidence="1">
    <location>
        <begin position="35"/>
        <end position="55"/>
    </location>
</feature>
<feature type="transmembrane region" description="Helical" evidence="1">
    <location>
        <begin position="67"/>
        <end position="87"/>
    </location>
</feature>
<feature type="transmembrane region" description="Helical" evidence="1">
    <location>
        <begin position="96"/>
        <end position="116"/>
    </location>
</feature>
<feature type="binding site" evidence="1">
    <location>
        <position position="74"/>
    </location>
    <ligand>
        <name>Na(+)</name>
        <dbReference type="ChEBI" id="CHEBI:29101"/>
        <note>structural</note>
    </ligand>
</feature>
<feature type="binding site" evidence="1">
    <location>
        <position position="77"/>
    </location>
    <ligand>
        <name>Na(+)</name>
        <dbReference type="ChEBI" id="CHEBI:29101"/>
        <note>structural</note>
    </ligand>
</feature>
<feature type="strand" evidence="2">
    <location>
        <begin position="143"/>
        <end position="147"/>
    </location>
</feature>
<feature type="helix" evidence="2">
    <location>
        <begin position="152"/>
        <end position="165"/>
    </location>
</feature>
<feature type="strand" evidence="2">
    <location>
        <begin position="169"/>
        <end position="175"/>
    </location>
</feature>
<feature type="helix" evidence="2">
    <location>
        <begin position="176"/>
        <end position="182"/>
    </location>
</feature>
<feature type="strand" evidence="2">
    <location>
        <begin position="189"/>
        <end position="196"/>
    </location>
</feature>
<feature type="helix" evidence="2">
    <location>
        <begin position="198"/>
        <end position="207"/>
    </location>
</feature>
<feature type="helix" evidence="2">
    <location>
        <begin position="209"/>
        <end position="213"/>
    </location>
</feature>
<feature type="strand" evidence="2">
    <location>
        <begin position="216"/>
        <end position="223"/>
    </location>
</feature>
<feature type="strand" evidence="2">
    <location>
        <begin position="229"/>
        <end position="234"/>
    </location>
</feature>
<feature type="helix" evidence="2">
    <location>
        <begin position="236"/>
        <end position="242"/>
    </location>
</feature>
<feature type="helix" evidence="2">
    <location>
        <begin position="247"/>
        <end position="249"/>
    </location>
</feature>
<feature type="helix" evidence="2">
    <location>
        <begin position="250"/>
        <end position="268"/>
    </location>
</feature>
<sequence length="270" mass="28330">MLDIIILVVIGGAFGAMTREFIMLMVPPLTDGFPLDILVANVVACFLLGTVTALYARKIHSRDVHTIIGTGMMGGVSTFSSFAYGSVVLASASMSAFLIAAAYVTVSVVAGYVAVLAGMKFGEKSADILHRYPPMASIIDSGLVTVESRHSVAETIERVAAKAKSMGMNVFTRVDHGAGAKEAGLGLPPTELIIFGNPQNGTVLMQDKRTIGLDLPIRALAWEDGSGKVWLTVNDPAWLAQRHSLGLSSDVAIKAMVTGTGTVTKYAAGD</sequence>
<comment type="function">
    <text evidence="1">Fluoride-specific ion channel. Important for reducing fluoride concentration in the cell, thus reducing its toxicity.</text>
</comment>
<comment type="catalytic activity">
    <reaction evidence="1">
        <text>fluoride(in) = fluoride(out)</text>
        <dbReference type="Rhea" id="RHEA:76159"/>
        <dbReference type="ChEBI" id="CHEBI:17051"/>
    </reaction>
    <physiologicalReaction direction="left-to-right" evidence="1">
        <dbReference type="Rhea" id="RHEA:76160"/>
    </physiologicalReaction>
</comment>
<comment type="activity regulation">
    <text evidence="1">Na(+) is not transported, but it plays an essential structural role and its presence is essential for fluoride channel function.</text>
</comment>
<comment type="subcellular location">
    <subcellularLocation>
        <location evidence="1">Cell inner membrane</location>
        <topology evidence="1">Multi-pass membrane protein</topology>
    </subcellularLocation>
</comment>
<comment type="similarity">
    <text evidence="1">Belongs to the fluoride channel Fluc/FEX (TC 1.A.43) family.</text>
</comment>
<keyword id="KW-0002">3D-structure</keyword>
<keyword id="KW-0997">Cell inner membrane</keyword>
<keyword id="KW-1003">Cell membrane</keyword>
<keyword id="KW-0407">Ion channel</keyword>
<keyword id="KW-0406">Ion transport</keyword>
<keyword id="KW-0472">Membrane</keyword>
<keyword id="KW-0479">Metal-binding</keyword>
<keyword id="KW-0915">Sodium</keyword>
<keyword id="KW-0812">Transmembrane</keyword>
<keyword id="KW-1133">Transmembrane helix</keyword>
<keyword id="KW-0813">Transport</keyword>
<protein>
    <recommendedName>
        <fullName evidence="1">Fluoride-specific ion channel FluC 1</fullName>
    </recommendedName>
</protein>
<reference key="1">
    <citation type="journal article" date="2005" name="J. Bacteriol.">
        <title>Completion of the genome sequence of Brucella abortus and comparison to the highly similar genomes of Brucella melitensis and Brucella suis.</title>
        <authorList>
            <person name="Halling S.M."/>
            <person name="Peterson-Burch B.D."/>
            <person name="Bricker B.J."/>
            <person name="Zuerner R.L."/>
            <person name="Qing Z."/>
            <person name="Li L.-L."/>
            <person name="Kapur V."/>
            <person name="Alt D.P."/>
            <person name="Olsen S.C."/>
        </authorList>
    </citation>
    <scope>NUCLEOTIDE SEQUENCE [LARGE SCALE GENOMIC DNA]</scope>
    <source>
        <strain>9-941</strain>
    </source>
</reference>
<name>FLUC1_BRUAB</name>
<gene>
    <name evidence="1" type="primary">fluC1</name>
    <name evidence="1" type="synonym">crcB1</name>
    <name type="ordered locus">BruAb1_1366</name>
</gene>
<accession>Q57CD7</accession>
<evidence type="ECO:0000255" key="1">
    <source>
        <dbReference type="HAMAP-Rule" id="MF_00454"/>
    </source>
</evidence>
<evidence type="ECO:0007829" key="2">
    <source>
        <dbReference type="PDB" id="7TJ1"/>
    </source>
</evidence>